<protein>
    <recommendedName>
        <fullName evidence="1">2-dehydropantoate 2-reductase</fullName>
        <ecNumber evidence="1">1.1.1.169</ecNumber>
    </recommendedName>
    <alternativeName>
        <fullName evidence="1">Ketopantoate reductase</fullName>
        <shortName evidence="1">KPR</shortName>
    </alternativeName>
</protein>
<proteinExistence type="inferred from homology"/>
<feature type="chain" id="PRO_0000411434" description="2-dehydropantoate 2-reductase">
    <location>
        <begin position="1"/>
        <end position="307"/>
    </location>
</feature>
<feature type="active site" description="Proton donor" evidence="1">
    <location>
        <position position="184"/>
    </location>
</feature>
<feature type="binding site" evidence="1">
    <location>
        <begin position="7"/>
        <end position="12"/>
    </location>
    <ligand>
        <name>NADP(+)</name>
        <dbReference type="ChEBI" id="CHEBI:58349"/>
    </ligand>
</feature>
<feature type="binding site" evidence="1">
    <location>
        <position position="102"/>
    </location>
    <ligand>
        <name>NADP(+)</name>
        <dbReference type="ChEBI" id="CHEBI:58349"/>
    </ligand>
</feature>
<feature type="binding site" evidence="1">
    <location>
        <position position="102"/>
    </location>
    <ligand>
        <name>substrate</name>
    </ligand>
</feature>
<feature type="binding site" evidence="1">
    <location>
        <position position="128"/>
    </location>
    <ligand>
        <name>NADP(+)</name>
        <dbReference type="ChEBI" id="CHEBI:58349"/>
    </ligand>
</feature>
<feature type="binding site" evidence="1">
    <location>
        <position position="188"/>
    </location>
    <ligand>
        <name>substrate</name>
    </ligand>
</feature>
<feature type="binding site" evidence="1">
    <location>
        <position position="192"/>
    </location>
    <ligand>
        <name>substrate</name>
    </ligand>
</feature>
<feature type="binding site" evidence="1">
    <location>
        <position position="255"/>
    </location>
    <ligand>
        <name>substrate</name>
    </ligand>
</feature>
<feature type="binding site" evidence="1">
    <location>
        <position position="268"/>
    </location>
    <ligand>
        <name>NADP(+)</name>
        <dbReference type="ChEBI" id="CHEBI:58349"/>
    </ligand>
</feature>
<accession>P0DC93</accession>
<accession>P65667</accession>
<accession>Q9A0B3</accession>
<organism>
    <name type="scientific">Streptococcus pyogenes serotype M3 (strain SSI-1)</name>
    <dbReference type="NCBI Taxonomy" id="193567"/>
    <lineage>
        <taxon>Bacteria</taxon>
        <taxon>Bacillati</taxon>
        <taxon>Bacillota</taxon>
        <taxon>Bacilli</taxon>
        <taxon>Lactobacillales</taxon>
        <taxon>Streptococcaceae</taxon>
        <taxon>Streptococcus</taxon>
    </lineage>
</organism>
<keyword id="KW-0963">Cytoplasm</keyword>
<keyword id="KW-0521">NADP</keyword>
<keyword id="KW-0560">Oxidoreductase</keyword>
<keyword id="KW-0566">Pantothenate biosynthesis</keyword>
<gene>
    <name type="primary">apbA</name>
    <name type="ordered locus">SPs1277</name>
</gene>
<comment type="function">
    <text evidence="1">Catalyzes the NADPH-dependent reduction of ketopantoate into pantoic acid.</text>
</comment>
<comment type="catalytic activity">
    <reaction evidence="1">
        <text>(R)-pantoate + NADP(+) = 2-dehydropantoate + NADPH + H(+)</text>
        <dbReference type="Rhea" id="RHEA:16233"/>
        <dbReference type="ChEBI" id="CHEBI:11561"/>
        <dbReference type="ChEBI" id="CHEBI:15378"/>
        <dbReference type="ChEBI" id="CHEBI:15980"/>
        <dbReference type="ChEBI" id="CHEBI:57783"/>
        <dbReference type="ChEBI" id="CHEBI:58349"/>
        <dbReference type="EC" id="1.1.1.169"/>
    </reaction>
</comment>
<comment type="pathway">
    <text evidence="1">Cofactor biosynthesis; (R)-pantothenate biosynthesis; (R)-pantoate from 3-methyl-2-oxobutanoate: step 2/2.</text>
</comment>
<comment type="subcellular location">
    <subcellularLocation>
        <location evidence="1">Cytoplasm</location>
    </subcellularLocation>
</comment>
<comment type="similarity">
    <text evidence="2">Belongs to the ketopantoate reductase family.</text>
</comment>
<evidence type="ECO:0000250" key="1">
    <source>
        <dbReference type="UniProtKB" id="P0A9J4"/>
    </source>
</evidence>
<evidence type="ECO:0000305" key="2"/>
<sequence>MLVYIAGSGAMGCRFGYQISKTNNDVILLDNWEDHINAIKENGLVVTGDVEETVKLPIMKPTEATQEADLIILFTKAMQLPQMLQDIKGIIGKETKVLCLLNGLGHEDVIRQYIPEHNILMGVTVWTAGLEGPGRAHLQGVGALNLQSMDPSNQEAGHQVADLLNEANLNATYDENVVPNIWRKACVNGTMNSTCALLDCTIGELFASEDGLKMVKEIIHEFVIVGQAEGVELNEEEITQYVMDTSVKAAHHYPSMHQDLVQNHRLTEIDFINGAVNTKGEKLGINTPYCRMITELVHAKEAVLNIQ</sequence>
<reference key="1">
    <citation type="journal article" date="2003" name="Genome Res.">
        <title>Genome sequence of an M3 strain of Streptococcus pyogenes reveals a large-scale genomic rearrangement in invasive strains and new insights into phage evolution.</title>
        <authorList>
            <person name="Nakagawa I."/>
            <person name="Kurokawa K."/>
            <person name="Yamashita A."/>
            <person name="Nakata M."/>
            <person name="Tomiyasu Y."/>
            <person name="Okahashi N."/>
            <person name="Kawabata S."/>
            <person name="Yamazaki K."/>
            <person name="Shiba T."/>
            <person name="Yasunaga T."/>
            <person name="Hayashi H."/>
            <person name="Hattori M."/>
            <person name="Hamada S."/>
        </authorList>
    </citation>
    <scope>NUCLEOTIDE SEQUENCE [LARGE SCALE GENOMIC DNA]</scope>
    <source>
        <strain>SSI-1</strain>
    </source>
</reference>
<name>PANE_STRPQ</name>
<dbReference type="EC" id="1.1.1.169" evidence="1"/>
<dbReference type="EMBL" id="BA000034">
    <property type="protein sequence ID" value="BAC64372.1"/>
    <property type="molecule type" value="Genomic_DNA"/>
</dbReference>
<dbReference type="RefSeq" id="WP_010922156.1">
    <property type="nucleotide sequence ID" value="NC_004606.1"/>
</dbReference>
<dbReference type="SMR" id="P0DC93"/>
<dbReference type="KEGG" id="sps:SPs1277"/>
<dbReference type="HOGENOM" id="CLU_031468_0_0_9"/>
<dbReference type="UniPathway" id="UPA00028">
    <property type="reaction ID" value="UER00004"/>
</dbReference>
<dbReference type="GO" id="GO:0005737">
    <property type="term" value="C:cytoplasm"/>
    <property type="evidence" value="ECO:0007669"/>
    <property type="project" value="UniProtKB-SubCell"/>
</dbReference>
<dbReference type="GO" id="GO:0008677">
    <property type="term" value="F:2-dehydropantoate 2-reductase activity"/>
    <property type="evidence" value="ECO:0007669"/>
    <property type="project" value="UniProtKB-EC"/>
</dbReference>
<dbReference type="GO" id="GO:0050661">
    <property type="term" value="F:NADP binding"/>
    <property type="evidence" value="ECO:0007669"/>
    <property type="project" value="TreeGrafter"/>
</dbReference>
<dbReference type="GO" id="GO:0015940">
    <property type="term" value="P:pantothenate biosynthetic process"/>
    <property type="evidence" value="ECO:0007669"/>
    <property type="project" value="UniProtKB-UniPathway"/>
</dbReference>
<dbReference type="Gene3D" id="1.10.1040.10">
    <property type="entry name" value="N-(1-d-carboxylethyl)-l-norvaline Dehydrogenase, domain 2"/>
    <property type="match status" value="1"/>
</dbReference>
<dbReference type="Gene3D" id="3.40.50.720">
    <property type="entry name" value="NAD(P)-binding Rossmann-like Domain"/>
    <property type="match status" value="1"/>
</dbReference>
<dbReference type="InterPro" id="IPR008927">
    <property type="entry name" value="6-PGluconate_DH-like_C_sf"/>
</dbReference>
<dbReference type="InterPro" id="IPR013328">
    <property type="entry name" value="6PGD_dom2"/>
</dbReference>
<dbReference type="InterPro" id="IPR003710">
    <property type="entry name" value="ApbA"/>
</dbReference>
<dbReference type="InterPro" id="IPR050838">
    <property type="entry name" value="Ketopantoate_reductase"/>
</dbReference>
<dbReference type="InterPro" id="IPR013752">
    <property type="entry name" value="KPA_reductase"/>
</dbReference>
<dbReference type="InterPro" id="IPR013332">
    <property type="entry name" value="KPR_N"/>
</dbReference>
<dbReference type="InterPro" id="IPR036291">
    <property type="entry name" value="NAD(P)-bd_dom_sf"/>
</dbReference>
<dbReference type="NCBIfam" id="TIGR00745">
    <property type="entry name" value="apbA_panE"/>
    <property type="match status" value="1"/>
</dbReference>
<dbReference type="NCBIfam" id="NF005088">
    <property type="entry name" value="PRK06522.1-2"/>
    <property type="match status" value="1"/>
</dbReference>
<dbReference type="PANTHER" id="PTHR43765:SF2">
    <property type="entry name" value="2-DEHYDROPANTOATE 2-REDUCTASE"/>
    <property type="match status" value="1"/>
</dbReference>
<dbReference type="PANTHER" id="PTHR43765">
    <property type="entry name" value="2-DEHYDROPANTOATE 2-REDUCTASE-RELATED"/>
    <property type="match status" value="1"/>
</dbReference>
<dbReference type="Pfam" id="PF02558">
    <property type="entry name" value="ApbA"/>
    <property type="match status" value="1"/>
</dbReference>
<dbReference type="Pfam" id="PF08546">
    <property type="entry name" value="ApbA_C"/>
    <property type="match status" value="1"/>
</dbReference>
<dbReference type="SUPFAM" id="SSF48179">
    <property type="entry name" value="6-phosphogluconate dehydrogenase C-terminal domain-like"/>
    <property type="match status" value="1"/>
</dbReference>
<dbReference type="SUPFAM" id="SSF51735">
    <property type="entry name" value="NAD(P)-binding Rossmann-fold domains"/>
    <property type="match status" value="1"/>
</dbReference>